<dbReference type="EMBL" id="U60054">
    <property type="protein sequence ID" value="AAC80258.1"/>
    <property type="molecule type" value="Genomic_DNA"/>
</dbReference>
<dbReference type="SMR" id="P0C0F0"/>
<dbReference type="STRING" id="1314.SD89_09170"/>
<dbReference type="eggNOG" id="COG1278">
    <property type="taxonomic scope" value="Bacteria"/>
</dbReference>
<dbReference type="GO" id="GO:0005737">
    <property type="term" value="C:cytoplasm"/>
    <property type="evidence" value="ECO:0007669"/>
    <property type="project" value="UniProtKB-SubCell"/>
</dbReference>
<dbReference type="GO" id="GO:0003677">
    <property type="term" value="F:DNA binding"/>
    <property type="evidence" value="ECO:0007669"/>
    <property type="project" value="UniProtKB-KW"/>
</dbReference>
<dbReference type="CDD" id="cd04458">
    <property type="entry name" value="CSP_CDS"/>
    <property type="match status" value="1"/>
</dbReference>
<dbReference type="Gene3D" id="2.40.50.140">
    <property type="entry name" value="Nucleic acid-binding proteins"/>
    <property type="match status" value="1"/>
</dbReference>
<dbReference type="InterPro" id="IPR012156">
    <property type="entry name" value="Cold_shock_CspA"/>
</dbReference>
<dbReference type="InterPro" id="IPR050181">
    <property type="entry name" value="Cold_shock_domain"/>
</dbReference>
<dbReference type="InterPro" id="IPR011129">
    <property type="entry name" value="CSD"/>
</dbReference>
<dbReference type="InterPro" id="IPR019844">
    <property type="entry name" value="CSD_CS"/>
</dbReference>
<dbReference type="InterPro" id="IPR002059">
    <property type="entry name" value="CSP_DNA-bd"/>
</dbReference>
<dbReference type="InterPro" id="IPR012340">
    <property type="entry name" value="NA-bd_OB-fold"/>
</dbReference>
<dbReference type="PANTHER" id="PTHR11544">
    <property type="entry name" value="COLD SHOCK DOMAIN CONTAINING PROTEINS"/>
    <property type="match status" value="1"/>
</dbReference>
<dbReference type="Pfam" id="PF00313">
    <property type="entry name" value="CSD"/>
    <property type="match status" value="1"/>
</dbReference>
<dbReference type="PIRSF" id="PIRSF002599">
    <property type="entry name" value="Cold_shock_A"/>
    <property type="match status" value="1"/>
</dbReference>
<dbReference type="PRINTS" id="PR00050">
    <property type="entry name" value="COLDSHOCK"/>
</dbReference>
<dbReference type="SMART" id="SM00357">
    <property type="entry name" value="CSP"/>
    <property type="match status" value="1"/>
</dbReference>
<dbReference type="SUPFAM" id="SSF50249">
    <property type="entry name" value="Nucleic acid-binding proteins"/>
    <property type="match status" value="1"/>
</dbReference>
<dbReference type="PROSITE" id="PS00352">
    <property type="entry name" value="CSD_1"/>
    <property type="match status" value="1"/>
</dbReference>
<dbReference type="PROSITE" id="PS51857">
    <property type="entry name" value="CSD_2"/>
    <property type="match status" value="1"/>
</dbReference>
<sequence length="45" mass="4994">EKGFGFISTENGQDVFAHFSAIQTNGFKTLEEGQKVAFDVEEGQR</sequence>
<evidence type="ECO:0000250" key="1"/>
<reference key="1">
    <citation type="journal article" date="1997" name="J. Ind. Microbiol. Biotechnol.">
        <title>Detection and speciation of bacteria through PCR using universal major cold-shock protein primer oligomers.</title>
        <authorList>
            <person name="Francis K.P."/>
            <person name="Stewart G.S.A.B."/>
        </authorList>
    </citation>
    <scope>NUCLEOTIDE SEQUENCE [GENOMIC DNA]</scope>
    <source>
        <strain>NCTC 8198</strain>
    </source>
</reference>
<accession>P0C0F0</accession>
<accession>P0A359</accession>
<accession>Q54974</accession>
<name>CSPA_STRPY</name>
<protein>
    <recommendedName>
        <fullName>Major cold shock protein</fullName>
    </recommendedName>
</protein>
<proteinExistence type="inferred from homology"/>
<comment type="subunit">
    <text evidence="1">Homodimer.</text>
</comment>
<comment type="subcellular location">
    <subcellularLocation>
        <location evidence="1">Cytoplasm</location>
    </subcellularLocation>
</comment>
<comment type="induction">
    <text evidence="1">In response to low temperature.</text>
</comment>
<keyword id="KW-0010">Activator</keyword>
<keyword id="KW-0963">Cytoplasm</keyword>
<keyword id="KW-0238">DNA-binding</keyword>
<keyword id="KW-0346">Stress response</keyword>
<keyword id="KW-0804">Transcription</keyword>
<keyword id="KW-0805">Transcription regulation</keyword>
<gene>
    <name type="primary">cspA</name>
    <name type="synonym">csp</name>
    <name type="synonym">cspC</name>
</gene>
<organism>
    <name type="scientific">Streptococcus pyogenes</name>
    <dbReference type="NCBI Taxonomy" id="1314"/>
    <lineage>
        <taxon>Bacteria</taxon>
        <taxon>Bacillati</taxon>
        <taxon>Bacillota</taxon>
        <taxon>Bacilli</taxon>
        <taxon>Lactobacillales</taxon>
        <taxon>Streptococcaceae</taxon>
        <taxon>Streptococcus</taxon>
    </lineage>
</organism>
<feature type="chain" id="PRO_0000100333" description="Major cold shock protein">
    <location>
        <begin position="1" status="less than"/>
        <end position="45" status="greater than"/>
    </location>
</feature>
<feature type="domain" description="CSD">
    <location>
        <begin position="1" status="less than"/>
        <end position="45" status="greater than"/>
    </location>
</feature>
<feature type="non-terminal residue">
    <location>
        <position position="1"/>
    </location>
</feature>
<feature type="non-terminal residue">
    <location>
        <position position="45"/>
    </location>
</feature>